<reference key="1">
    <citation type="journal article" date="1992" name="Yeast">
        <title>The complete sequence of a 9,543 bp segment on the left arm of chromosome III reveals five open reading frames including glucokinase and the protein disulfide isomerase.</title>
        <authorList>
            <person name="Scherens B."/>
            <person name="Messenguy F."/>
            <person name="Gigot D."/>
            <person name="Dubois E."/>
        </authorList>
    </citation>
    <scope>NUCLEOTIDE SEQUENCE [GENOMIC DNA]</scope>
</reference>
<reference key="2">
    <citation type="journal article" date="1992" name="Nature">
        <title>The complete DNA sequence of yeast chromosome III.</title>
        <authorList>
            <person name="Oliver S.G."/>
            <person name="van der Aart Q.J.M."/>
            <person name="Agostoni-Carbone M.L."/>
            <person name="Aigle M."/>
            <person name="Alberghina L."/>
            <person name="Alexandraki D."/>
            <person name="Antoine G."/>
            <person name="Anwar R."/>
            <person name="Ballesta J.P.G."/>
            <person name="Benit P."/>
            <person name="Berben G."/>
            <person name="Bergantino E."/>
            <person name="Biteau N."/>
            <person name="Bolle P.-A."/>
            <person name="Bolotin-Fukuhara M."/>
            <person name="Brown A."/>
            <person name="Brown A.J.P."/>
            <person name="Buhler J.-M."/>
            <person name="Carcano C."/>
            <person name="Carignani G."/>
            <person name="Cederberg H."/>
            <person name="Chanet R."/>
            <person name="Contreras R."/>
            <person name="Crouzet M."/>
            <person name="Daignan-Fornier B."/>
            <person name="Defoor E."/>
            <person name="Delgado M.D."/>
            <person name="Demolder J."/>
            <person name="Doira C."/>
            <person name="Dubois E."/>
            <person name="Dujon B."/>
            <person name="Duesterhoeft A."/>
            <person name="Erdmann D."/>
            <person name="Esteban M."/>
            <person name="Fabre F."/>
            <person name="Fairhead C."/>
            <person name="Faye G."/>
            <person name="Feldmann H."/>
            <person name="Fiers W."/>
            <person name="Francingues-Gaillard M.-C."/>
            <person name="Franco L."/>
            <person name="Frontali L."/>
            <person name="Fukuhara H."/>
            <person name="Fuller L.J."/>
            <person name="Galland P."/>
            <person name="Gent M.E."/>
            <person name="Gigot D."/>
            <person name="Gilliquet V."/>
            <person name="Glansdorff N."/>
            <person name="Goffeau A."/>
            <person name="Grenson M."/>
            <person name="Grisanti P."/>
            <person name="Grivell L.A."/>
            <person name="de Haan M."/>
            <person name="Haasemann M."/>
            <person name="Hatat D."/>
            <person name="Hoenicka J."/>
            <person name="Hegemann J.H."/>
            <person name="Herbert C.J."/>
            <person name="Hilger F."/>
            <person name="Hohmann S."/>
            <person name="Hollenberg C.P."/>
            <person name="Huse K."/>
            <person name="Iborra F."/>
            <person name="Indge K.J."/>
            <person name="Isono K."/>
            <person name="Jacq C."/>
            <person name="Jacquet M."/>
            <person name="James C.M."/>
            <person name="Jauniaux J.-C."/>
            <person name="Jia Y."/>
            <person name="Jimenez A."/>
            <person name="Kelly A."/>
            <person name="Kleinhans U."/>
            <person name="Kreisl P."/>
            <person name="Lanfranchi G."/>
            <person name="Lewis C."/>
            <person name="van der Linden C.G."/>
            <person name="Lucchini G."/>
            <person name="Lutzenkirchen K."/>
            <person name="Maat M.J."/>
            <person name="Mallet L."/>
            <person name="Mannhaupt G."/>
            <person name="Martegani E."/>
            <person name="Mathieu A."/>
            <person name="Maurer C.T.C."/>
            <person name="McConnell D."/>
            <person name="McKee R.A."/>
            <person name="Messenguy F."/>
            <person name="Mewes H.-W."/>
            <person name="Molemans F."/>
            <person name="Montague M.A."/>
            <person name="Muzi Falconi M."/>
            <person name="Navas L."/>
            <person name="Newlon C.S."/>
            <person name="Noone D."/>
            <person name="Pallier C."/>
            <person name="Panzeri L."/>
            <person name="Pearson B.M."/>
            <person name="Perea J."/>
            <person name="Philippsen P."/>
            <person name="Pierard A."/>
            <person name="Planta R.J."/>
            <person name="Plevani P."/>
            <person name="Poetsch B."/>
            <person name="Pohl F.M."/>
            <person name="Purnelle B."/>
            <person name="Ramezani Rad M."/>
            <person name="Rasmussen S.W."/>
            <person name="Raynal A."/>
            <person name="Remacha M.A."/>
            <person name="Richterich P."/>
            <person name="Roberts A.B."/>
            <person name="Rodriguez F."/>
            <person name="Sanz E."/>
            <person name="Schaaff-Gerstenschlaeger I."/>
            <person name="Scherens B."/>
            <person name="Schweitzer B."/>
            <person name="Shu Y."/>
            <person name="Skala J."/>
            <person name="Slonimski P.P."/>
            <person name="Sor F."/>
            <person name="Soustelle C."/>
            <person name="Spiegelberg R."/>
            <person name="Stateva L.I."/>
            <person name="Steensma H.Y."/>
            <person name="Steiner S."/>
            <person name="Thierry A."/>
            <person name="Thireos G."/>
            <person name="Tzermia M."/>
            <person name="Urrestarazu L.A."/>
            <person name="Valle G."/>
            <person name="Vetter I."/>
            <person name="van Vliet-Reedijk J.C."/>
            <person name="Voet M."/>
            <person name="Volckaert G."/>
            <person name="Vreken P."/>
            <person name="Wang H."/>
            <person name="Warmington J.R."/>
            <person name="von Wettstein D."/>
            <person name="Wicksteed B.L."/>
            <person name="Wilson C."/>
            <person name="Wurst H."/>
            <person name="Xu G."/>
            <person name="Yoshikawa A."/>
            <person name="Zimmermann F.K."/>
            <person name="Sgouros J.G."/>
        </authorList>
    </citation>
    <scope>NUCLEOTIDE SEQUENCE [LARGE SCALE GENOMIC DNA]</scope>
    <source>
        <strain>ATCC 204508 / S288c</strain>
    </source>
</reference>
<reference key="3">
    <citation type="journal article" date="2014" name="G3 (Bethesda)">
        <title>The reference genome sequence of Saccharomyces cerevisiae: Then and now.</title>
        <authorList>
            <person name="Engel S.R."/>
            <person name="Dietrich F.S."/>
            <person name="Fisk D.G."/>
            <person name="Binkley G."/>
            <person name="Balakrishnan R."/>
            <person name="Costanzo M.C."/>
            <person name="Dwight S.S."/>
            <person name="Hitz B.C."/>
            <person name="Karra K."/>
            <person name="Nash R.S."/>
            <person name="Weng S."/>
            <person name="Wong E.D."/>
            <person name="Lloyd P."/>
            <person name="Skrzypek M.S."/>
            <person name="Miyasato S.R."/>
            <person name="Simison M."/>
            <person name="Cherry J.M."/>
        </authorList>
    </citation>
    <scope>GENOME REANNOTATION</scope>
    <source>
        <strain>ATCC 204508 / S288c</strain>
    </source>
</reference>
<reference key="4">
    <citation type="journal article" date="2003" name="Nature">
        <title>Global analysis of protein localization in budding yeast.</title>
        <authorList>
            <person name="Huh W.-K."/>
            <person name="Falvo J.V."/>
            <person name="Gerke L.C."/>
            <person name="Carroll A.S."/>
            <person name="Howson R.W."/>
            <person name="Weissman J.S."/>
            <person name="O'Shea E.K."/>
        </authorList>
    </citation>
    <scope>SUBCELLULAR LOCATION [LARGE SCALE ANALYSIS]</scope>
</reference>
<reference key="5">
    <citation type="journal article" date="2003" name="Nature">
        <title>Global analysis of protein expression in yeast.</title>
        <authorList>
            <person name="Ghaemmaghami S."/>
            <person name="Huh W.-K."/>
            <person name="Bower K."/>
            <person name="Howson R.W."/>
            <person name="Belle A."/>
            <person name="Dephoure N."/>
            <person name="O'Shea E.K."/>
            <person name="Weissman J.S."/>
        </authorList>
    </citation>
    <scope>LEVEL OF PROTEIN EXPRESSION [LARGE SCALE ANALYSIS]</scope>
</reference>
<reference key="6">
    <citation type="journal article" date="2006" name="Proc. Natl. Acad. Sci. U.S.A.">
        <title>A global topology map of the Saccharomyces cerevisiae membrane proteome.</title>
        <authorList>
            <person name="Kim H."/>
            <person name="Melen K."/>
            <person name="Oesterberg M."/>
            <person name="von Heijne G."/>
        </authorList>
    </citation>
    <scope>TOPOLOGY [LARGE SCALE ANALYSIS]</scope>
    <source>
        <strain>ATCC 208353 / W303-1A</strain>
    </source>
</reference>
<reference key="7">
    <citation type="journal article" date="2009" name="Mol. Syst. Biol.">
        <title>Global analysis of the glycoproteome in Saccharomyces cerevisiae reveals new roles for protein glycosylation in eukaryotes.</title>
        <authorList>
            <person name="Kung L.A."/>
            <person name="Tao S.-C."/>
            <person name="Qian J."/>
            <person name="Smith M.G."/>
            <person name="Snyder M."/>
            <person name="Zhu H."/>
        </authorList>
    </citation>
    <scope>GLYCOSYLATION [LARGE SCALE ANALYSIS]</scope>
</reference>
<reference key="8">
    <citation type="journal article" date="2009" name="Science">
        <title>Comprehensive characterization of genes required for protein folding in the endoplasmic reticulum.</title>
        <authorList>
            <person name="Jonikas M.C."/>
            <person name="Collins S.R."/>
            <person name="Denic V."/>
            <person name="Oh E."/>
            <person name="Quan E.M."/>
            <person name="Schmid V."/>
            <person name="Weibezahn J."/>
            <person name="Schwappach B."/>
            <person name="Walter P."/>
            <person name="Weissman J.S."/>
            <person name="Schuldiner M."/>
        </authorList>
    </citation>
    <scope>IDENTIFICATION IN EMC COMPLEX</scope>
</reference>
<reference key="9">
    <citation type="journal article" date="2018" name="Elife">
        <title>The ER membrane protein complex interacts cotranslationally to enable biogenesis of multipass membrane proteins.</title>
        <authorList>
            <person name="Shurtleff M.J."/>
            <person name="Itzhak D.N."/>
            <person name="Hussmann J.A."/>
            <person name="Schirle Oakdale N.T."/>
            <person name="Costa E.A."/>
            <person name="Jonikas M."/>
            <person name="Weibezahn J."/>
            <person name="Popova K.D."/>
            <person name="Jan C.H."/>
            <person name="Sinitcyn P."/>
            <person name="Vembar S.S."/>
            <person name="Hernandez H."/>
            <person name="Cox J."/>
            <person name="Burlingame A.L."/>
            <person name="Brodsky J.L."/>
            <person name="Frost A."/>
            <person name="Borner G.H."/>
            <person name="Weissman J.S."/>
        </authorList>
    </citation>
    <scope>FUNCTION</scope>
    <scope>SUBUNIT</scope>
</reference>
<name>EMC1_YEAST</name>
<feature type="signal peptide" evidence="2">
    <location>
        <begin position="1"/>
        <end position="24"/>
    </location>
</feature>
<feature type="chain" id="PRO_0000202547" description="ER membrane protein complex subunit 1">
    <location>
        <begin position="25"/>
        <end position="760"/>
    </location>
</feature>
<feature type="topological domain" description="Lumenal" evidence="2">
    <location>
        <begin position="25"/>
        <end position="723"/>
    </location>
</feature>
<feature type="transmembrane region" description="Helical" evidence="2">
    <location>
        <begin position="724"/>
        <end position="744"/>
    </location>
</feature>
<feature type="topological domain" description="Cytoplasmic" evidence="2">
    <location>
        <begin position="745"/>
        <end position="760"/>
    </location>
</feature>
<feature type="glycosylation site" description="N-linked (GlcNAc...) asparagine" evidence="2">
    <location>
        <position position="73"/>
    </location>
</feature>
<feature type="glycosylation site" description="N-linked (GlcNAc...) asparagine" evidence="2">
    <location>
        <position position="106"/>
    </location>
</feature>
<feature type="glycosylation site" description="N-linked (GlcNAc...) asparagine" evidence="2">
    <location>
        <position position="192"/>
    </location>
</feature>
<feature type="glycosylation site" description="N-linked (GlcNAc...) asparagine" evidence="2">
    <location>
        <position position="202"/>
    </location>
</feature>
<feature type="glycosylation site" description="N-linked (GlcNAc...) asparagine" evidence="2">
    <location>
        <position position="420"/>
    </location>
</feature>
<feature type="glycosylation site" description="N-linked (GlcNAc...) asparagine" evidence="2">
    <location>
        <position position="443"/>
    </location>
</feature>
<feature type="glycosylation site" description="N-linked (GlcNAc...) asparagine" evidence="2">
    <location>
        <position position="574"/>
    </location>
</feature>
<feature type="glycosylation site" description="N-linked (GlcNAc...) asparagine" evidence="2">
    <location>
        <position position="578"/>
    </location>
</feature>
<feature type="turn" evidence="9">
    <location>
        <begin position="27"/>
        <end position="32"/>
    </location>
</feature>
<feature type="strand" evidence="9">
    <location>
        <begin position="35"/>
        <end position="37"/>
    </location>
</feature>
<feature type="strand" evidence="9">
    <location>
        <begin position="42"/>
        <end position="48"/>
    </location>
</feature>
<feature type="turn" evidence="9">
    <location>
        <begin position="50"/>
        <end position="52"/>
    </location>
</feature>
<feature type="strand" evidence="9">
    <location>
        <begin position="53"/>
        <end position="60"/>
    </location>
</feature>
<feature type="strand" evidence="9">
    <location>
        <begin position="67"/>
        <end position="73"/>
    </location>
</feature>
<feature type="turn" evidence="9">
    <location>
        <begin position="74"/>
        <end position="76"/>
    </location>
</feature>
<feature type="strand" evidence="9">
    <location>
        <begin position="79"/>
        <end position="87"/>
    </location>
</feature>
<feature type="turn" evidence="9">
    <location>
        <begin position="89"/>
        <end position="91"/>
    </location>
</feature>
<feature type="strand" evidence="9">
    <location>
        <begin position="92"/>
        <end position="97"/>
    </location>
</feature>
<feature type="strand" evidence="9">
    <location>
        <begin position="101"/>
        <end position="106"/>
    </location>
</feature>
<feature type="turn" evidence="9">
    <location>
        <begin position="107"/>
        <end position="110"/>
    </location>
</feature>
<feature type="strand" evidence="9">
    <location>
        <begin position="111"/>
        <end position="119"/>
    </location>
</feature>
<feature type="strand" evidence="9">
    <location>
        <begin position="122"/>
        <end position="128"/>
    </location>
</feature>
<feature type="turn" evidence="10">
    <location>
        <begin position="143"/>
        <end position="145"/>
    </location>
</feature>
<feature type="strand" evidence="10">
    <location>
        <begin position="146"/>
        <end position="148"/>
    </location>
</feature>
<feature type="strand" evidence="10">
    <location>
        <begin position="150"/>
        <end position="155"/>
    </location>
</feature>
<feature type="strand" evidence="10">
    <location>
        <begin position="158"/>
        <end position="160"/>
    </location>
</feature>
<feature type="strand" evidence="9">
    <location>
        <begin position="177"/>
        <end position="179"/>
    </location>
</feature>
<feature type="strand" evidence="9">
    <location>
        <begin position="183"/>
        <end position="185"/>
    </location>
</feature>
<feature type="strand" evidence="9">
    <location>
        <begin position="187"/>
        <end position="190"/>
    </location>
</feature>
<feature type="strand" evidence="9">
    <location>
        <begin position="192"/>
        <end position="200"/>
    </location>
</feature>
<feature type="strand" evidence="9">
    <location>
        <begin position="207"/>
        <end position="213"/>
    </location>
</feature>
<feature type="strand" evidence="9">
    <location>
        <begin position="224"/>
        <end position="226"/>
    </location>
</feature>
<feature type="helix" evidence="9">
    <location>
        <begin position="248"/>
        <end position="269"/>
    </location>
</feature>
<feature type="helix" evidence="10">
    <location>
        <begin position="275"/>
        <end position="281"/>
    </location>
</feature>
<feature type="helix" evidence="9">
    <location>
        <begin position="292"/>
        <end position="295"/>
    </location>
</feature>
<feature type="strand" evidence="9">
    <location>
        <begin position="300"/>
        <end position="302"/>
    </location>
</feature>
<feature type="strand" evidence="9">
    <location>
        <begin position="309"/>
        <end position="311"/>
    </location>
</feature>
<feature type="turn" evidence="9">
    <location>
        <begin position="316"/>
        <end position="319"/>
    </location>
</feature>
<feature type="strand" evidence="10">
    <location>
        <begin position="322"/>
        <end position="327"/>
    </location>
</feature>
<feature type="strand" evidence="9">
    <location>
        <begin position="331"/>
        <end position="340"/>
    </location>
</feature>
<feature type="strand" evidence="9">
    <location>
        <begin position="345"/>
        <end position="350"/>
    </location>
</feature>
<feature type="strand" evidence="9">
    <location>
        <begin position="353"/>
        <end position="359"/>
    </location>
</feature>
<feature type="strand" evidence="10">
    <location>
        <begin position="362"/>
        <end position="364"/>
    </location>
</feature>
<feature type="strand" evidence="9">
    <location>
        <begin position="366"/>
        <end position="369"/>
    </location>
</feature>
<feature type="strand" evidence="9">
    <location>
        <begin position="379"/>
        <end position="381"/>
    </location>
</feature>
<feature type="turn" evidence="10">
    <location>
        <begin position="387"/>
        <end position="390"/>
    </location>
</feature>
<feature type="strand" evidence="9">
    <location>
        <begin position="391"/>
        <end position="396"/>
    </location>
</feature>
<feature type="turn" evidence="10">
    <location>
        <begin position="397"/>
        <end position="399"/>
    </location>
</feature>
<feature type="strand" evidence="9">
    <location>
        <begin position="401"/>
        <end position="405"/>
    </location>
</feature>
<feature type="strand" evidence="9">
    <location>
        <begin position="425"/>
        <end position="431"/>
    </location>
</feature>
<feature type="strand" evidence="9">
    <location>
        <begin position="436"/>
        <end position="444"/>
    </location>
</feature>
<feature type="strand" evidence="9">
    <location>
        <begin position="446"/>
        <end position="451"/>
    </location>
</feature>
<feature type="strand" evidence="9">
    <location>
        <begin position="458"/>
        <end position="465"/>
    </location>
</feature>
<feature type="strand" evidence="9">
    <location>
        <begin position="474"/>
        <end position="477"/>
    </location>
</feature>
<feature type="strand" evidence="9">
    <location>
        <begin position="483"/>
        <end position="486"/>
    </location>
</feature>
<feature type="strand" evidence="9">
    <location>
        <begin position="493"/>
        <end position="499"/>
    </location>
</feature>
<feature type="turn" evidence="9">
    <location>
        <begin position="500"/>
        <end position="503"/>
    </location>
</feature>
<feature type="strand" evidence="9">
    <location>
        <begin position="504"/>
        <end position="510"/>
    </location>
</feature>
<feature type="strand" evidence="9">
    <location>
        <begin position="512"/>
        <end position="514"/>
    </location>
</feature>
<feature type="strand" evidence="9">
    <location>
        <begin position="517"/>
        <end position="523"/>
    </location>
</feature>
<feature type="strand" evidence="10">
    <location>
        <begin position="529"/>
        <end position="531"/>
    </location>
</feature>
<feature type="strand" evidence="9">
    <location>
        <begin position="534"/>
        <end position="537"/>
    </location>
</feature>
<feature type="strand" evidence="9">
    <location>
        <begin position="539"/>
        <end position="548"/>
    </location>
</feature>
<feature type="strand" evidence="9">
    <location>
        <begin position="553"/>
        <end position="564"/>
    </location>
</feature>
<feature type="strand" evidence="10">
    <location>
        <begin position="566"/>
        <end position="569"/>
    </location>
</feature>
<feature type="turn" evidence="9">
    <location>
        <begin position="583"/>
        <end position="586"/>
    </location>
</feature>
<feature type="strand" evidence="9">
    <location>
        <begin position="592"/>
        <end position="602"/>
    </location>
</feature>
<feature type="strand" evidence="9">
    <location>
        <begin position="604"/>
        <end position="609"/>
    </location>
</feature>
<feature type="strand" evidence="9">
    <location>
        <begin position="613"/>
        <end position="615"/>
    </location>
</feature>
<feature type="strand" evidence="9">
    <location>
        <begin position="620"/>
        <end position="625"/>
    </location>
</feature>
<feature type="strand" evidence="9">
    <location>
        <begin position="630"/>
        <end position="634"/>
    </location>
</feature>
<feature type="turn" evidence="9">
    <location>
        <begin position="635"/>
        <end position="637"/>
    </location>
</feature>
<feature type="helix" evidence="9">
    <location>
        <begin position="645"/>
        <end position="650"/>
    </location>
</feature>
<feature type="turn" evidence="10">
    <location>
        <begin position="669"/>
        <end position="671"/>
    </location>
</feature>
<feature type="strand" evidence="10">
    <location>
        <begin position="672"/>
        <end position="676"/>
    </location>
</feature>
<feature type="strand" evidence="9">
    <location>
        <begin position="686"/>
        <end position="691"/>
    </location>
</feature>
<feature type="strand" evidence="9">
    <location>
        <begin position="698"/>
        <end position="712"/>
    </location>
</feature>
<feature type="helix" evidence="9">
    <location>
        <begin position="727"/>
        <end position="757"/>
    </location>
</feature>
<keyword id="KW-0002">3D-structure</keyword>
<keyword id="KW-0256">Endoplasmic reticulum</keyword>
<keyword id="KW-0325">Glycoprotein</keyword>
<keyword id="KW-0472">Membrane</keyword>
<keyword id="KW-1185">Reference proteome</keyword>
<keyword id="KW-0732">Signal</keyword>
<keyword id="KW-0812">Transmembrane</keyword>
<keyword id="KW-1133">Transmembrane helix</keyword>
<dbReference type="EMBL" id="X59720">
    <property type="protein sequence ID" value="CAA42370.1"/>
    <property type="molecule type" value="Genomic_DNA"/>
</dbReference>
<dbReference type="EMBL" id="BK006937">
    <property type="protein sequence ID" value="DAA07440.1"/>
    <property type="molecule type" value="Genomic_DNA"/>
</dbReference>
<dbReference type="PIR" id="S19374">
    <property type="entry name" value="S19374"/>
</dbReference>
<dbReference type="RefSeq" id="NP_009884.1">
    <property type="nucleotide sequence ID" value="NM_001178690.1"/>
</dbReference>
<dbReference type="PDB" id="6WB9">
    <property type="method" value="EM"/>
    <property type="resolution" value="3.00 A"/>
    <property type="chains" value="1=1-760"/>
</dbReference>
<dbReference type="PDB" id="7KRA">
    <property type="method" value="EM"/>
    <property type="resolution" value="3.20 A"/>
    <property type="chains" value="A=1-760"/>
</dbReference>
<dbReference type="PDB" id="7KTX">
    <property type="method" value="EM"/>
    <property type="resolution" value="4.30 A"/>
    <property type="chains" value="A=1-760"/>
</dbReference>
<dbReference type="PDBsum" id="6WB9"/>
<dbReference type="PDBsum" id="7KRA"/>
<dbReference type="PDBsum" id="7KTX"/>
<dbReference type="EMDB" id="EMD-21587"/>
<dbReference type="EMDB" id="EMD-23003"/>
<dbReference type="EMDB" id="EMD-23033"/>
<dbReference type="SMR" id="P25574"/>
<dbReference type="BioGRID" id="30939">
    <property type="interactions" value="190"/>
</dbReference>
<dbReference type="ComplexPortal" id="CPX-307">
    <property type="entry name" value="Endoplasmic Reticulum Membrane Complex"/>
</dbReference>
<dbReference type="DIP" id="DIP-5140N"/>
<dbReference type="FunCoup" id="P25574">
    <property type="interactions" value="929"/>
</dbReference>
<dbReference type="IntAct" id="P25574">
    <property type="interactions" value="31"/>
</dbReference>
<dbReference type="MINT" id="P25574"/>
<dbReference type="STRING" id="4932.YCL045C"/>
<dbReference type="TCDB" id="3.A.27.1.2">
    <property type="family name" value="the endoplasmic reticulum membrane protein insertion complex (emc) family"/>
</dbReference>
<dbReference type="GlyCosmos" id="P25574">
    <property type="glycosylation" value="8 sites, No reported glycans"/>
</dbReference>
<dbReference type="GlyGen" id="P25574">
    <property type="glycosylation" value="8 sites"/>
</dbReference>
<dbReference type="PaxDb" id="4932-YCL045C"/>
<dbReference type="PeptideAtlas" id="P25574"/>
<dbReference type="ABCD" id="P25574">
    <property type="antibodies" value="1 sequenced antibody"/>
</dbReference>
<dbReference type="EnsemblFungi" id="YCL045C_mRNA">
    <property type="protein sequence ID" value="YCL045C"/>
    <property type="gene ID" value="YCL045C"/>
</dbReference>
<dbReference type="GeneID" id="850312"/>
<dbReference type="KEGG" id="sce:YCL045C"/>
<dbReference type="AGR" id="SGD:S000000550"/>
<dbReference type="SGD" id="S000000550">
    <property type="gene designation" value="EMC1"/>
</dbReference>
<dbReference type="VEuPathDB" id="FungiDB:YCL045C"/>
<dbReference type="eggNOG" id="KOG2103">
    <property type="taxonomic scope" value="Eukaryota"/>
</dbReference>
<dbReference type="GeneTree" id="ENSGT00390000002461"/>
<dbReference type="HOGENOM" id="CLU_005034_3_0_1"/>
<dbReference type="InParanoid" id="P25574"/>
<dbReference type="OMA" id="PIPEQKL"/>
<dbReference type="OrthoDB" id="28092at2759"/>
<dbReference type="BioCyc" id="YEAST:G3O-29301-MONOMER"/>
<dbReference type="BioGRID-ORCS" id="850312">
    <property type="hits" value="3 hits in 10 CRISPR screens"/>
</dbReference>
<dbReference type="PRO" id="PR:P25574"/>
<dbReference type="Proteomes" id="UP000002311">
    <property type="component" value="Chromosome III"/>
</dbReference>
<dbReference type="RNAct" id="P25574">
    <property type="molecule type" value="protein"/>
</dbReference>
<dbReference type="GO" id="GO:0072546">
    <property type="term" value="C:EMC complex"/>
    <property type="evidence" value="ECO:0000314"/>
    <property type="project" value="UniProtKB"/>
</dbReference>
<dbReference type="GO" id="GO:0005783">
    <property type="term" value="C:endoplasmic reticulum"/>
    <property type="evidence" value="ECO:0007005"/>
    <property type="project" value="SGD"/>
</dbReference>
<dbReference type="GO" id="GO:0006644">
    <property type="term" value="P:phospholipid metabolic process"/>
    <property type="evidence" value="ECO:0000314"/>
    <property type="project" value="ComplexPortal"/>
</dbReference>
<dbReference type="GO" id="GO:0015914">
    <property type="term" value="P:phospholipid transport"/>
    <property type="evidence" value="ECO:0000315"/>
    <property type="project" value="ComplexPortal"/>
</dbReference>
<dbReference type="GO" id="GO:0034975">
    <property type="term" value="P:protein folding in endoplasmic reticulum"/>
    <property type="evidence" value="ECO:0007003"/>
    <property type="project" value="SGD"/>
</dbReference>
<dbReference type="GO" id="GO:0045050">
    <property type="term" value="P:protein insertion into ER membrane by stop-transfer membrane-anchor sequence"/>
    <property type="evidence" value="ECO:0000315"/>
    <property type="project" value="UniProtKB"/>
</dbReference>
<dbReference type="InterPro" id="IPR026895">
    <property type="entry name" value="EMC1"/>
</dbReference>
<dbReference type="InterPro" id="IPR011678">
    <property type="entry name" value="EMC1_C"/>
</dbReference>
<dbReference type="PANTHER" id="PTHR21573">
    <property type="entry name" value="ER MEMBRANE PROTEIN COMPLEX SUBUNIT 1"/>
    <property type="match status" value="1"/>
</dbReference>
<dbReference type="PANTHER" id="PTHR21573:SF0">
    <property type="entry name" value="ER MEMBRANE PROTEIN COMPLEX SUBUNIT 1"/>
    <property type="match status" value="1"/>
</dbReference>
<dbReference type="Pfam" id="PF07774">
    <property type="entry name" value="EMC1_C"/>
    <property type="match status" value="1"/>
</dbReference>
<sequence length="760" mass="87181">MKITCTDLVYVFILLFLNTSCVQAVFSDDAFITDWQLANLGPWEKVIPDSRDRNRVLILSNPTETSCLVSSFNVSSGQILFRNVLPFTIDEIQLDSNDHNAMVCVNSSSNHWQKYDLHDWFLLEEGVDNAPSTTILPQSSYLNDQVSIKNNELHILDEQSKLAEWKLELPQGFNKVEYFHREDPLALVLNVNDTQYMGFSANGTELIPVWQRDEWLTNVVDYAVLDVFDSRDVELNKDMKAELDSNSLWNAYWLRLTTNWNRLINLLKENQFSPGRVFTKLLALDAKDTTVSDLKFGFAKILIVLTHDGFIGGLDMVNKGQLIWKLDLEIDQGVKMFWTDKNHDELVVFSHDGHYLTIEVTKDQPIIKSRSPLSERKTVDSVIRLNEHDHQYLIKFEDKDHLLFKLNPGKNTDVPIVANNHSSSHIFVTEHDTNGIYGYIIENDTVKQTWKKAVNSKEKMVAYSKRETTNLNTLGITLGDKSVLYKYLYPNLAAYLIANEEHHTITFNLIDTITGEILITQEHKDSPDFRFPMDIVFGEYWVVYSYFSSEPVPEQKLVVVELYESLTPDERLSNSSDNFSYDPLTGHINKPQFQTKQFIFPEIIKTMSISKTTDDITTKAIVMELENGQITYIPKLLLNARGKPAEEMAKDKKKEFMATPYTPVIPINDNFIITHFRNLLPGSDSQLISIPTNLESTSIICDLGLDVFCTRITPSGQFDLMSPTFEKGKLLITIFVLLVITYFIRPSVSNKKLKSQWLIK</sequence>
<organism>
    <name type="scientific">Saccharomyces cerevisiae (strain ATCC 204508 / S288c)</name>
    <name type="common">Baker's yeast</name>
    <dbReference type="NCBI Taxonomy" id="559292"/>
    <lineage>
        <taxon>Eukaryota</taxon>
        <taxon>Fungi</taxon>
        <taxon>Dikarya</taxon>
        <taxon>Ascomycota</taxon>
        <taxon>Saccharomycotina</taxon>
        <taxon>Saccharomycetes</taxon>
        <taxon>Saccharomycetales</taxon>
        <taxon>Saccharomycetaceae</taxon>
        <taxon>Saccharomyces</taxon>
    </lineage>
</organism>
<comment type="function">
    <text evidence="1 7">Part of the endoplasmic reticulum membrane protein complex (EMC) that enables the energy-independent insertion into endoplasmic reticulum membranes of newly synthesized membrane proteins (PubMed:29809151). Preferentially accommodates proteins with transmembrane domains that are weakly hydrophobic or contain destabilizing features such as charged and aromatic residues (PubMed:29809151). Involved in the cotranslational insertion of multi-pass membrane proteins in which stop-transfer membrane-anchor sequences become ER membrane spanning helices (PubMed:29809151). It is also required for the post-translational insertion of tail-anchored/TA proteins in endoplasmic reticulum membranes. By mediating the proper cotranslational insertion of N-terminal transmembrane domains in an N-exo topology, with translocated N-terminus in the lumen of the ER, controls the topology of multi-pass membrane proteins (By similarity).</text>
</comment>
<comment type="subunit">
    <text evidence="5 7">Component of the ER membrane protein complex (EMC), which is composed of EMC1, EMC2, EMC3, EMC4, EMC5 and EMC6.</text>
</comment>
<comment type="interaction">
    <interactant intactId="EBI-21744">
        <id>P25574</id>
    </interactant>
    <interactant intactId="EBI-12501">
        <id>P80967</id>
        <label>TOM5</label>
    </interactant>
    <organismsDiffer>false</organismsDiffer>
    <experiments>2</experiments>
</comment>
<comment type="subcellular location">
    <subcellularLocation>
        <location evidence="3">Endoplasmic reticulum membrane</location>
        <topology evidence="3">Single-pass type I membrane protein</topology>
    </subcellularLocation>
</comment>
<comment type="PTM">
    <text evidence="6">N-glycosylated.</text>
</comment>
<comment type="miscellaneous">
    <text evidence="4">Present with 2840 molecules/cell in log phase SD medium.</text>
</comment>
<comment type="similarity">
    <text evidence="8">Belongs to the EMC1 family.</text>
</comment>
<evidence type="ECO:0000250" key="1">
    <source>
        <dbReference type="UniProtKB" id="Q8N766"/>
    </source>
</evidence>
<evidence type="ECO:0000255" key="2"/>
<evidence type="ECO:0000269" key="3">
    <source>
    </source>
</evidence>
<evidence type="ECO:0000269" key="4">
    <source>
    </source>
</evidence>
<evidence type="ECO:0000269" key="5">
    <source>
    </source>
</evidence>
<evidence type="ECO:0000269" key="6">
    <source>
    </source>
</evidence>
<evidence type="ECO:0000269" key="7">
    <source>
    </source>
</evidence>
<evidence type="ECO:0000305" key="8"/>
<evidence type="ECO:0007829" key="9">
    <source>
        <dbReference type="PDB" id="6WB9"/>
    </source>
</evidence>
<evidence type="ECO:0007829" key="10">
    <source>
        <dbReference type="PDB" id="7KRA"/>
    </source>
</evidence>
<protein>
    <recommendedName>
        <fullName>ER membrane protein complex subunit 1</fullName>
    </recommendedName>
</protein>
<gene>
    <name type="primary">EMC1</name>
    <name type="ordered locus">YCL045C</name>
    <name type="ORF">YCL315</name>
    <name type="ORF">YCL45C</name>
</gene>
<accession>P25574</accession>
<accession>D6VQX1</accession>
<proteinExistence type="evidence at protein level"/>